<accession>C0MGL4</accession>
<feature type="chain" id="PRO_1000204213" description="3-dehydroquinate dehydratase">
    <location>
        <begin position="1"/>
        <end position="226"/>
    </location>
</feature>
<feature type="active site" description="Proton donor/acceptor" evidence="1">
    <location>
        <position position="118"/>
    </location>
</feature>
<feature type="active site" description="Schiff-base intermediate with substrate" evidence="1">
    <location>
        <position position="143"/>
    </location>
</feature>
<feature type="binding site" evidence="1">
    <location>
        <begin position="30"/>
        <end position="32"/>
    </location>
    <ligand>
        <name>3-dehydroquinate</name>
        <dbReference type="ChEBI" id="CHEBI:32364"/>
    </ligand>
</feature>
<feature type="binding site" evidence="1">
    <location>
        <position position="62"/>
    </location>
    <ligand>
        <name>3-dehydroquinate</name>
        <dbReference type="ChEBI" id="CHEBI:32364"/>
    </ligand>
</feature>
<feature type="binding site" evidence="1">
    <location>
        <position position="186"/>
    </location>
    <ligand>
        <name>3-dehydroquinate</name>
        <dbReference type="ChEBI" id="CHEBI:32364"/>
    </ligand>
</feature>
<feature type="binding site" evidence="1">
    <location>
        <position position="205"/>
    </location>
    <ligand>
        <name>3-dehydroquinate</name>
        <dbReference type="ChEBI" id="CHEBI:32364"/>
    </ligand>
</feature>
<feature type="binding site" evidence="1">
    <location>
        <position position="209"/>
    </location>
    <ligand>
        <name>3-dehydroquinate</name>
        <dbReference type="ChEBI" id="CHEBI:32364"/>
    </ligand>
</feature>
<organism>
    <name type="scientific">Streptococcus equi subsp. zooepidemicus (strain H70)</name>
    <dbReference type="NCBI Taxonomy" id="553483"/>
    <lineage>
        <taxon>Bacteria</taxon>
        <taxon>Bacillati</taxon>
        <taxon>Bacillota</taxon>
        <taxon>Bacilli</taxon>
        <taxon>Lactobacillales</taxon>
        <taxon>Streptococcaceae</taxon>
        <taxon>Streptococcus</taxon>
    </lineage>
</organism>
<gene>
    <name evidence="1" type="primary">aroD</name>
    <name type="ordered locus">SZO_10980</name>
</gene>
<reference key="1">
    <citation type="journal article" date="2009" name="PLoS Pathog.">
        <title>Genomic evidence for the evolution of Streptococcus equi: host restriction, increased virulence, and genetic exchange with human pathogens.</title>
        <authorList>
            <person name="Holden M.T.G."/>
            <person name="Heather Z."/>
            <person name="Paillot R."/>
            <person name="Steward K.F."/>
            <person name="Webb K."/>
            <person name="Ainslie F."/>
            <person name="Jourdan T."/>
            <person name="Bason N.C."/>
            <person name="Holroyd N.E."/>
            <person name="Mungall K."/>
            <person name="Quail M.A."/>
            <person name="Sanders M."/>
            <person name="Simmonds M."/>
            <person name="Willey D."/>
            <person name="Brooks K."/>
            <person name="Aanensen D.M."/>
            <person name="Spratt B.G."/>
            <person name="Jolley K.A."/>
            <person name="Maiden M.C.J."/>
            <person name="Kehoe M."/>
            <person name="Chanter N."/>
            <person name="Bentley S.D."/>
            <person name="Robinson C."/>
            <person name="Maskell D.J."/>
            <person name="Parkhill J."/>
            <person name="Waller A.S."/>
        </authorList>
    </citation>
    <scope>NUCLEOTIDE SEQUENCE [LARGE SCALE GENOMIC DNA]</scope>
    <source>
        <strain>H70</strain>
    </source>
</reference>
<comment type="function">
    <text evidence="1">Involved in the third step of the chorismate pathway, which leads to the biosynthesis of aromatic amino acids. Catalyzes the cis-dehydration of 3-dehydroquinate (DHQ) and introduces the first double bond of the aromatic ring to yield 3-dehydroshikimate.</text>
</comment>
<comment type="catalytic activity">
    <reaction evidence="1">
        <text>3-dehydroquinate = 3-dehydroshikimate + H2O</text>
        <dbReference type="Rhea" id="RHEA:21096"/>
        <dbReference type="ChEBI" id="CHEBI:15377"/>
        <dbReference type="ChEBI" id="CHEBI:16630"/>
        <dbReference type="ChEBI" id="CHEBI:32364"/>
        <dbReference type="EC" id="4.2.1.10"/>
    </reaction>
</comment>
<comment type="pathway">
    <text evidence="1">Metabolic intermediate biosynthesis; chorismate biosynthesis; chorismate from D-erythrose 4-phosphate and phosphoenolpyruvate: step 3/7.</text>
</comment>
<comment type="subunit">
    <text evidence="1">Homodimer.</text>
</comment>
<comment type="similarity">
    <text evidence="1">Belongs to the type-I 3-dehydroquinase family.</text>
</comment>
<protein>
    <recommendedName>
        <fullName evidence="1">3-dehydroquinate dehydratase</fullName>
        <shortName evidence="1">3-dehydroquinase</shortName>
        <ecNumber evidence="1">4.2.1.10</ecNumber>
    </recommendedName>
    <alternativeName>
        <fullName evidence="1">Type I DHQase</fullName>
    </alternativeName>
    <alternativeName>
        <fullName evidence="1">Type I dehydroquinase</fullName>
        <shortName evidence="1">DHQ1</shortName>
    </alternativeName>
</protein>
<proteinExistence type="inferred from homology"/>
<sequence>MKIVAPVMPRNVEEAQSIDVSKYQDVNLIEWRADFLPKEDIVSVAPAIFEKFAGREIIFTLRTSQEGGHITLSDQEYVDLIKEINAIYNPDYIDFEYFSHKAVFHEMLDFPNLVLSYHNFDETPENLMEAFSEMTKLAPRVVKIAVMPQSEQDVLDLMNYTRGFKTLNPEQEFATMSMGRLGRLSRLAGDVVGSSWTFVSLDQASAPGQVSLADMKRILHILESED</sequence>
<keyword id="KW-0028">Amino-acid biosynthesis</keyword>
<keyword id="KW-0057">Aromatic amino acid biosynthesis</keyword>
<keyword id="KW-0456">Lyase</keyword>
<keyword id="KW-0704">Schiff base</keyword>
<name>AROD_STRS7</name>
<dbReference type="EC" id="4.2.1.10" evidence="1"/>
<dbReference type="EMBL" id="FM204884">
    <property type="protein sequence ID" value="CAW99491.1"/>
    <property type="molecule type" value="Genomic_DNA"/>
</dbReference>
<dbReference type="SMR" id="C0MGL4"/>
<dbReference type="KEGG" id="seq:SZO_10980"/>
<dbReference type="eggNOG" id="COG0710">
    <property type="taxonomic scope" value="Bacteria"/>
</dbReference>
<dbReference type="HOGENOM" id="CLU_064444_0_0_9"/>
<dbReference type="UniPathway" id="UPA00053">
    <property type="reaction ID" value="UER00086"/>
</dbReference>
<dbReference type="Proteomes" id="UP000001368">
    <property type="component" value="Chromosome"/>
</dbReference>
<dbReference type="GO" id="GO:0003855">
    <property type="term" value="F:3-dehydroquinate dehydratase activity"/>
    <property type="evidence" value="ECO:0007669"/>
    <property type="project" value="UniProtKB-UniRule"/>
</dbReference>
<dbReference type="GO" id="GO:0046279">
    <property type="term" value="P:3,4-dihydroxybenzoate biosynthetic process"/>
    <property type="evidence" value="ECO:0007669"/>
    <property type="project" value="TreeGrafter"/>
</dbReference>
<dbReference type="GO" id="GO:0008652">
    <property type="term" value="P:amino acid biosynthetic process"/>
    <property type="evidence" value="ECO:0007669"/>
    <property type="project" value="UniProtKB-KW"/>
</dbReference>
<dbReference type="GO" id="GO:0009073">
    <property type="term" value="P:aromatic amino acid family biosynthetic process"/>
    <property type="evidence" value="ECO:0007669"/>
    <property type="project" value="UniProtKB-KW"/>
</dbReference>
<dbReference type="GO" id="GO:0009423">
    <property type="term" value="P:chorismate biosynthetic process"/>
    <property type="evidence" value="ECO:0007669"/>
    <property type="project" value="UniProtKB-UniRule"/>
</dbReference>
<dbReference type="CDD" id="cd00502">
    <property type="entry name" value="DHQase_I"/>
    <property type="match status" value="1"/>
</dbReference>
<dbReference type="FunFam" id="3.20.20.70:FF:000047">
    <property type="entry name" value="3-dehydroquinate dehydratase"/>
    <property type="match status" value="1"/>
</dbReference>
<dbReference type="Gene3D" id="3.20.20.70">
    <property type="entry name" value="Aldolase class I"/>
    <property type="match status" value="1"/>
</dbReference>
<dbReference type="HAMAP" id="MF_00214">
    <property type="entry name" value="AroD"/>
    <property type="match status" value="1"/>
</dbReference>
<dbReference type="InterPro" id="IPR013785">
    <property type="entry name" value="Aldolase_TIM"/>
</dbReference>
<dbReference type="InterPro" id="IPR001381">
    <property type="entry name" value="DHquinase_I"/>
</dbReference>
<dbReference type="InterPro" id="IPR050146">
    <property type="entry name" value="Type-I_3-dehydroquinase"/>
</dbReference>
<dbReference type="NCBIfam" id="TIGR01093">
    <property type="entry name" value="aroD"/>
    <property type="match status" value="1"/>
</dbReference>
<dbReference type="PANTHER" id="PTHR43699">
    <property type="entry name" value="3-DEHYDROQUINATE DEHYDRATASE"/>
    <property type="match status" value="1"/>
</dbReference>
<dbReference type="PANTHER" id="PTHR43699:SF1">
    <property type="entry name" value="3-DEHYDROQUINATE DEHYDRATASE"/>
    <property type="match status" value="1"/>
</dbReference>
<dbReference type="Pfam" id="PF01487">
    <property type="entry name" value="DHquinase_I"/>
    <property type="match status" value="1"/>
</dbReference>
<dbReference type="SUPFAM" id="SSF51569">
    <property type="entry name" value="Aldolase"/>
    <property type="match status" value="1"/>
</dbReference>
<evidence type="ECO:0000255" key="1">
    <source>
        <dbReference type="HAMAP-Rule" id="MF_00214"/>
    </source>
</evidence>